<gene>
    <name evidence="1" type="primary">whiA</name>
    <name type="ordered locus">Franean1_2062</name>
</gene>
<keyword id="KW-0131">Cell cycle</keyword>
<keyword id="KW-0132">Cell division</keyword>
<keyword id="KW-0238">DNA-binding</keyword>
<evidence type="ECO:0000255" key="1">
    <source>
        <dbReference type="HAMAP-Rule" id="MF_01420"/>
    </source>
</evidence>
<evidence type="ECO:0000305" key="2"/>
<name>WHIA_PARS2</name>
<dbReference type="EMBL" id="CP000820">
    <property type="protein sequence ID" value="ABW11499.1"/>
    <property type="status" value="ALT_INIT"/>
    <property type="molecule type" value="Genomic_DNA"/>
</dbReference>
<dbReference type="SMR" id="A8KYR3"/>
<dbReference type="STRING" id="298653.Franean1_2062"/>
<dbReference type="KEGG" id="fre:Franean1_2062"/>
<dbReference type="eggNOG" id="COG1481">
    <property type="taxonomic scope" value="Bacteria"/>
</dbReference>
<dbReference type="HOGENOM" id="CLU_053282_0_0_11"/>
<dbReference type="GO" id="GO:0003677">
    <property type="term" value="F:DNA binding"/>
    <property type="evidence" value="ECO:0007669"/>
    <property type="project" value="UniProtKB-UniRule"/>
</dbReference>
<dbReference type="GO" id="GO:0051301">
    <property type="term" value="P:cell division"/>
    <property type="evidence" value="ECO:0007669"/>
    <property type="project" value="UniProtKB-UniRule"/>
</dbReference>
<dbReference type="GO" id="GO:0043937">
    <property type="term" value="P:regulation of sporulation"/>
    <property type="evidence" value="ECO:0007669"/>
    <property type="project" value="InterPro"/>
</dbReference>
<dbReference type="FunFam" id="3.10.28.10:FF:000001">
    <property type="entry name" value="Probable cell division protein WhiA"/>
    <property type="match status" value="1"/>
</dbReference>
<dbReference type="Gene3D" id="3.10.28.10">
    <property type="entry name" value="Homing endonucleases"/>
    <property type="match status" value="1"/>
</dbReference>
<dbReference type="HAMAP" id="MF_01420">
    <property type="entry name" value="HTH_type_WhiA"/>
    <property type="match status" value="1"/>
</dbReference>
<dbReference type="InterPro" id="IPR027434">
    <property type="entry name" value="Homing_endonucl"/>
</dbReference>
<dbReference type="InterPro" id="IPR018478">
    <property type="entry name" value="Sporu_reg_WhiA_N_dom"/>
</dbReference>
<dbReference type="InterPro" id="IPR003802">
    <property type="entry name" value="Sporulation_regulator_WhiA"/>
</dbReference>
<dbReference type="InterPro" id="IPR023054">
    <property type="entry name" value="Sporulation_regulator_WhiA_C"/>
</dbReference>
<dbReference type="InterPro" id="IPR039518">
    <property type="entry name" value="WhiA_LAGLIDADG_dom"/>
</dbReference>
<dbReference type="NCBIfam" id="TIGR00647">
    <property type="entry name" value="DNA_bind_WhiA"/>
    <property type="match status" value="1"/>
</dbReference>
<dbReference type="PANTHER" id="PTHR37307">
    <property type="entry name" value="CELL DIVISION PROTEIN WHIA-RELATED"/>
    <property type="match status" value="1"/>
</dbReference>
<dbReference type="PANTHER" id="PTHR37307:SF1">
    <property type="entry name" value="CELL DIVISION PROTEIN WHIA-RELATED"/>
    <property type="match status" value="1"/>
</dbReference>
<dbReference type="Pfam" id="PF02650">
    <property type="entry name" value="HTH_WhiA"/>
    <property type="match status" value="1"/>
</dbReference>
<dbReference type="Pfam" id="PF14527">
    <property type="entry name" value="LAGLIDADG_WhiA"/>
    <property type="match status" value="1"/>
</dbReference>
<dbReference type="Pfam" id="PF10298">
    <property type="entry name" value="WhiA_N"/>
    <property type="match status" value="1"/>
</dbReference>
<proteinExistence type="inferred from homology"/>
<accession>A8KYR3</accession>
<organism>
    <name type="scientific">Parafrankia sp. (strain EAN1pec)</name>
    <dbReference type="NCBI Taxonomy" id="298653"/>
    <lineage>
        <taxon>Bacteria</taxon>
        <taxon>Bacillati</taxon>
        <taxon>Actinomycetota</taxon>
        <taxon>Actinomycetes</taxon>
        <taxon>Frankiales</taxon>
        <taxon>Frankiaceae</taxon>
        <taxon>Parafrankia</taxon>
    </lineage>
</organism>
<feature type="chain" id="PRO_0000376486" description="Probable cell division protein WhiA">
    <location>
        <begin position="1"/>
        <end position="325"/>
    </location>
</feature>
<feature type="DNA-binding region" description="H-T-H motif" evidence="1">
    <location>
        <begin position="273"/>
        <end position="306"/>
    </location>
</feature>
<sequence length="325" mass="34635">MTATVKDELSRLRVAKPCCRRAEMAAMLRFAGGLHIVGGRIVVEAELDTGATARRLRREIAEVFGFPSSVAVLAAGGLRRSVRYIVRVERDGEQLARSTGLLDQRGRPVRGLPPQVVTGSACDAAAAWRGAFLAHGSLTEPGRSCSMEVTSPGPEAALALVGAARRMGVQAKSRDVRGVDRVVVRDGDAIGALLTKIGAHDSLMAWEERRMRREVRATANRLANFDDANLRRSARAAVAAGARVQAAMRILGDDAPDHLLAAGRLRLEHAQASLEELGALADPPLTKDAVAGRIRRLLALADKRANALGIPNTEASVSPELFENA</sequence>
<reference key="1">
    <citation type="journal article" date="2007" name="Genome Res.">
        <title>Genome characteristics of facultatively symbiotic Frankia sp. strains reflect host range and host plant biogeography.</title>
        <authorList>
            <person name="Normand P."/>
            <person name="Lapierre P."/>
            <person name="Tisa L.S."/>
            <person name="Gogarten J.P."/>
            <person name="Alloisio N."/>
            <person name="Bagnarol E."/>
            <person name="Bassi C.A."/>
            <person name="Berry A.M."/>
            <person name="Bickhart D.M."/>
            <person name="Choisne N."/>
            <person name="Couloux A."/>
            <person name="Cournoyer B."/>
            <person name="Cruveiller S."/>
            <person name="Daubin V."/>
            <person name="Demange N."/>
            <person name="Francino M.P."/>
            <person name="Goltsman E."/>
            <person name="Huang Y."/>
            <person name="Kopp O.R."/>
            <person name="Labarre L."/>
            <person name="Lapidus A."/>
            <person name="Lavire C."/>
            <person name="Marechal J."/>
            <person name="Martinez M."/>
            <person name="Mastronunzio J.E."/>
            <person name="Mullin B.C."/>
            <person name="Niemann J."/>
            <person name="Pujic P."/>
            <person name="Rawnsley T."/>
            <person name="Rouy Z."/>
            <person name="Schenowitz C."/>
            <person name="Sellstedt A."/>
            <person name="Tavares F."/>
            <person name="Tomkins J.P."/>
            <person name="Vallenet D."/>
            <person name="Valverde C."/>
            <person name="Wall L.G."/>
            <person name="Wang Y."/>
            <person name="Medigue C."/>
            <person name="Benson D.R."/>
        </authorList>
    </citation>
    <scope>NUCLEOTIDE SEQUENCE [LARGE SCALE GENOMIC DNA]</scope>
    <source>
        <strain>EAN1pec</strain>
    </source>
</reference>
<protein>
    <recommendedName>
        <fullName evidence="1">Probable cell division protein WhiA</fullName>
    </recommendedName>
</protein>
<comment type="function">
    <text evidence="1">Involved in cell division and chromosome segregation.</text>
</comment>
<comment type="similarity">
    <text evidence="1">Belongs to the WhiA family.</text>
</comment>
<comment type="sequence caution" evidence="2">
    <conflict type="erroneous initiation">
        <sequence resource="EMBL-CDS" id="ABW11499"/>
    </conflict>
</comment>